<comment type="function">
    <text evidence="1">Catalyzes the formation of S-adenosylmethionine (AdoMet) from methionine and ATP. The overall synthetic reaction is composed of two sequential steps, AdoMet formation and the subsequent tripolyphosphate hydrolysis which occurs prior to release of AdoMet from the enzyme.</text>
</comment>
<comment type="catalytic activity">
    <reaction evidence="1">
        <text>L-methionine + ATP + H2O = S-adenosyl-L-methionine + phosphate + diphosphate</text>
        <dbReference type="Rhea" id="RHEA:21080"/>
        <dbReference type="ChEBI" id="CHEBI:15377"/>
        <dbReference type="ChEBI" id="CHEBI:30616"/>
        <dbReference type="ChEBI" id="CHEBI:33019"/>
        <dbReference type="ChEBI" id="CHEBI:43474"/>
        <dbReference type="ChEBI" id="CHEBI:57844"/>
        <dbReference type="ChEBI" id="CHEBI:59789"/>
        <dbReference type="EC" id="2.5.1.6"/>
    </reaction>
</comment>
<comment type="cofactor">
    <cofactor evidence="1">
        <name>Mg(2+)</name>
        <dbReference type="ChEBI" id="CHEBI:18420"/>
    </cofactor>
    <text evidence="1">Binds 2 divalent ions per subunit.</text>
</comment>
<comment type="cofactor">
    <cofactor evidence="1">
        <name>K(+)</name>
        <dbReference type="ChEBI" id="CHEBI:29103"/>
    </cofactor>
    <text evidence="1">Binds 1 potassium ion per subunit.</text>
</comment>
<comment type="pathway">
    <text evidence="1">Amino-acid biosynthesis; S-adenosyl-L-methionine biosynthesis; S-adenosyl-L-methionine from L-methionine: step 1/1.</text>
</comment>
<comment type="subunit">
    <text evidence="1">Homotetramer; dimer of dimers.</text>
</comment>
<comment type="subcellular location">
    <subcellularLocation>
        <location evidence="1">Cytoplasm</location>
    </subcellularLocation>
</comment>
<comment type="similarity">
    <text evidence="1">Belongs to the AdoMet synthase family.</text>
</comment>
<evidence type="ECO:0000255" key="1">
    <source>
        <dbReference type="HAMAP-Rule" id="MF_00086"/>
    </source>
</evidence>
<protein>
    <recommendedName>
        <fullName evidence="1">S-adenosylmethionine synthase</fullName>
        <shortName evidence="1">AdoMet synthase</shortName>
        <ecNumber evidence="1">2.5.1.6</ecNumber>
    </recommendedName>
    <alternativeName>
        <fullName evidence="1">MAT</fullName>
    </alternativeName>
    <alternativeName>
        <fullName evidence="1">Methionine adenosyltransferase</fullName>
    </alternativeName>
</protein>
<feature type="chain" id="PRO_0000303002" description="S-adenosylmethionine synthase">
    <location>
        <begin position="1"/>
        <end position="384"/>
    </location>
</feature>
<feature type="region of interest" description="Flexible loop" evidence="1">
    <location>
        <begin position="99"/>
        <end position="109"/>
    </location>
</feature>
<feature type="binding site" description="in other chain" evidence="1">
    <location>
        <position position="15"/>
    </location>
    <ligand>
        <name>ATP</name>
        <dbReference type="ChEBI" id="CHEBI:30616"/>
        <note>ligand shared between two neighboring subunits</note>
    </ligand>
</feature>
<feature type="binding site" evidence="1">
    <location>
        <position position="17"/>
    </location>
    <ligand>
        <name>Mg(2+)</name>
        <dbReference type="ChEBI" id="CHEBI:18420"/>
    </ligand>
</feature>
<feature type="binding site" evidence="1">
    <location>
        <position position="43"/>
    </location>
    <ligand>
        <name>K(+)</name>
        <dbReference type="ChEBI" id="CHEBI:29103"/>
    </ligand>
</feature>
<feature type="binding site" description="in other chain" evidence="1">
    <location>
        <position position="56"/>
    </location>
    <ligand>
        <name>L-methionine</name>
        <dbReference type="ChEBI" id="CHEBI:57844"/>
        <note>ligand shared between two neighboring subunits</note>
    </ligand>
</feature>
<feature type="binding site" description="in other chain" evidence="1">
    <location>
        <position position="99"/>
    </location>
    <ligand>
        <name>L-methionine</name>
        <dbReference type="ChEBI" id="CHEBI:57844"/>
        <note>ligand shared between two neighboring subunits</note>
    </ligand>
</feature>
<feature type="binding site" description="in other chain" evidence="1">
    <location>
        <begin position="164"/>
        <end position="166"/>
    </location>
    <ligand>
        <name>ATP</name>
        <dbReference type="ChEBI" id="CHEBI:30616"/>
        <note>ligand shared between two neighboring subunits</note>
    </ligand>
</feature>
<feature type="binding site" description="in other chain" evidence="1">
    <location>
        <begin position="230"/>
        <end position="231"/>
    </location>
    <ligand>
        <name>ATP</name>
        <dbReference type="ChEBI" id="CHEBI:30616"/>
        <note>ligand shared between two neighboring subunits</note>
    </ligand>
</feature>
<feature type="binding site" evidence="1">
    <location>
        <position position="239"/>
    </location>
    <ligand>
        <name>ATP</name>
        <dbReference type="ChEBI" id="CHEBI:30616"/>
        <note>ligand shared between two neighboring subunits</note>
    </ligand>
</feature>
<feature type="binding site" evidence="1">
    <location>
        <position position="239"/>
    </location>
    <ligand>
        <name>L-methionine</name>
        <dbReference type="ChEBI" id="CHEBI:57844"/>
        <note>ligand shared between two neighboring subunits</note>
    </ligand>
</feature>
<feature type="binding site" description="in other chain" evidence="1">
    <location>
        <begin position="245"/>
        <end position="246"/>
    </location>
    <ligand>
        <name>ATP</name>
        <dbReference type="ChEBI" id="CHEBI:30616"/>
        <note>ligand shared between two neighboring subunits</note>
    </ligand>
</feature>
<feature type="binding site" evidence="1">
    <location>
        <position position="262"/>
    </location>
    <ligand>
        <name>ATP</name>
        <dbReference type="ChEBI" id="CHEBI:30616"/>
        <note>ligand shared between two neighboring subunits</note>
    </ligand>
</feature>
<feature type="binding site" evidence="1">
    <location>
        <position position="266"/>
    </location>
    <ligand>
        <name>ATP</name>
        <dbReference type="ChEBI" id="CHEBI:30616"/>
        <note>ligand shared between two neighboring subunits</note>
    </ligand>
</feature>
<feature type="binding site" description="in other chain" evidence="1">
    <location>
        <position position="270"/>
    </location>
    <ligand>
        <name>L-methionine</name>
        <dbReference type="ChEBI" id="CHEBI:57844"/>
        <note>ligand shared between two neighboring subunits</note>
    </ligand>
</feature>
<sequence length="384" mass="42020">MAKHLFTSESVSEGHPDKIADQISDAVLDAILEQDPKARVACETYVKTGMVLVGGEVTTNAWVDIEEITRRTIREIGYVHSDMGFDANSCAVLSAIGKQSPDINQGVDRENPLEQGAGDQGLMFGYATNETSVLMPAPITYAHRLVERQAEVRKNGALPWLRPDAKSQVTFQYDDGKIVGIDAVVLSTQHSEDINQKDLHEAVMEEIIKPVLPAEWITAHTKYFINPTGRFVIGGPMGDCGLTGRKIIVDTYGGMARHGGGAFSGKDPSKVDRSAAYAARYVAKNIVAAGLADRCEIQVSYAIGVAEPTSIMVEAFGTEKIPADQLTLLVREFFDLRPYGLIKMLDLLHPIYRETAAYGHFGREHFPWEKTDKAALLRDAAGLK</sequence>
<dbReference type="EC" id="2.5.1.6" evidence="1"/>
<dbReference type="EMBL" id="CP000308">
    <property type="protein sequence ID" value="ABG12303.1"/>
    <property type="molecule type" value="Genomic_DNA"/>
</dbReference>
<dbReference type="RefSeq" id="WP_002209971.1">
    <property type="nucleotide sequence ID" value="NZ_CP009906.1"/>
</dbReference>
<dbReference type="SMR" id="Q1CB69"/>
<dbReference type="GeneID" id="57973710"/>
<dbReference type="KEGG" id="ypa:YPA_0335"/>
<dbReference type="UniPathway" id="UPA00315">
    <property type="reaction ID" value="UER00080"/>
</dbReference>
<dbReference type="Proteomes" id="UP000001971">
    <property type="component" value="Chromosome"/>
</dbReference>
<dbReference type="GO" id="GO:0005737">
    <property type="term" value="C:cytoplasm"/>
    <property type="evidence" value="ECO:0007669"/>
    <property type="project" value="UniProtKB-SubCell"/>
</dbReference>
<dbReference type="GO" id="GO:0005524">
    <property type="term" value="F:ATP binding"/>
    <property type="evidence" value="ECO:0007669"/>
    <property type="project" value="UniProtKB-UniRule"/>
</dbReference>
<dbReference type="GO" id="GO:0000287">
    <property type="term" value="F:magnesium ion binding"/>
    <property type="evidence" value="ECO:0007669"/>
    <property type="project" value="UniProtKB-UniRule"/>
</dbReference>
<dbReference type="GO" id="GO:0004478">
    <property type="term" value="F:methionine adenosyltransferase activity"/>
    <property type="evidence" value="ECO:0007669"/>
    <property type="project" value="UniProtKB-UniRule"/>
</dbReference>
<dbReference type="GO" id="GO:0006730">
    <property type="term" value="P:one-carbon metabolic process"/>
    <property type="evidence" value="ECO:0007669"/>
    <property type="project" value="UniProtKB-KW"/>
</dbReference>
<dbReference type="GO" id="GO:0006556">
    <property type="term" value="P:S-adenosylmethionine biosynthetic process"/>
    <property type="evidence" value="ECO:0007669"/>
    <property type="project" value="UniProtKB-UniRule"/>
</dbReference>
<dbReference type="CDD" id="cd18079">
    <property type="entry name" value="S-AdoMet_synt"/>
    <property type="match status" value="1"/>
</dbReference>
<dbReference type="FunFam" id="3.30.300.10:FF:000001">
    <property type="entry name" value="S-adenosylmethionine synthase"/>
    <property type="match status" value="1"/>
</dbReference>
<dbReference type="FunFam" id="3.30.300.10:FF:000003">
    <property type="entry name" value="S-adenosylmethionine synthase"/>
    <property type="match status" value="1"/>
</dbReference>
<dbReference type="Gene3D" id="3.30.300.10">
    <property type="match status" value="3"/>
</dbReference>
<dbReference type="HAMAP" id="MF_00086">
    <property type="entry name" value="S_AdoMet_synth1"/>
    <property type="match status" value="1"/>
</dbReference>
<dbReference type="InterPro" id="IPR022631">
    <property type="entry name" value="ADOMET_SYNTHASE_CS"/>
</dbReference>
<dbReference type="InterPro" id="IPR022630">
    <property type="entry name" value="S-AdoMet_synt_C"/>
</dbReference>
<dbReference type="InterPro" id="IPR022629">
    <property type="entry name" value="S-AdoMet_synt_central"/>
</dbReference>
<dbReference type="InterPro" id="IPR022628">
    <property type="entry name" value="S-AdoMet_synt_N"/>
</dbReference>
<dbReference type="InterPro" id="IPR002133">
    <property type="entry name" value="S-AdoMet_synthetase"/>
</dbReference>
<dbReference type="InterPro" id="IPR022636">
    <property type="entry name" value="S-AdoMet_synthetase_sfam"/>
</dbReference>
<dbReference type="NCBIfam" id="TIGR01034">
    <property type="entry name" value="metK"/>
    <property type="match status" value="1"/>
</dbReference>
<dbReference type="PANTHER" id="PTHR11964">
    <property type="entry name" value="S-ADENOSYLMETHIONINE SYNTHETASE"/>
    <property type="match status" value="1"/>
</dbReference>
<dbReference type="Pfam" id="PF02773">
    <property type="entry name" value="S-AdoMet_synt_C"/>
    <property type="match status" value="1"/>
</dbReference>
<dbReference type="Pfam" id="PF02772">
    <property type="entry name" value="S-AdoMet_synt_M"/>
    <property type="match status" value="1"/>
</dbReference>
<dbReference type="Pfam" id="PF00438">
    <property type="entry name" value="S-AdoMet_synt_N"/>
    <property type="match status" value="1"/>
</dbReference>
<dbReference type="PIRSF" id="PIRSF000497">
    <property type="entry name" value="MAT"/>
    <property type="match status" value="1"/>
</dbReference>
<dbReference type="SUPFAM" id="SSF55973">
    <property type="entry name" value="S-adenosylmethionine synthetase"/>
    <property type="match status" value="3"/>
</dbReference>
<dbReference type="PROSITE" id="PS00376">
    <property type="entry name" value="ADOMET_SYNTHASE_1"/>
    <property type="match status" value="1"/>
</dbReference>
<dbReference type="PROSITE" id="PS00377">
    <property type="entry name" value="ADOMET_SYNTHASE_2"/>
    <property type="match status" value="1"/>
</dbReference>
<gene>
    <name evidence="1" type="primary">metK</name>
    <name type="ordered locus">YPA_0335</name>
</gene>
<name>METK_YERPA</name>
<organism>
    <name type="scientific">Yersinia pestis bv. Antiqua (strain Antiqua)</name>
    <dbReference type="NCBI Taxonomy" id="360102"/>
    <lineage>
        <taxon>Bacteria</taxon>
        <taxon>Pseudomonadati</taxon>
        <taxon>Pseudomonadota</taxon>
        <taxon>Gammaproteobacteria</taxon>
        <taxon>Enterobacterales</taxon>
        <taxon>Yersiniaceae</taxon>
        <taxon>Yersinia</taxon>
    </lineage>
</organism>
<reference key="1">
    <citation type="journal article" date="2006" name="J. Bacteriol.">
        <title>Complete genome sequence of Yersinia pestis strains Antiqua and Nepal516: evidence of gene reduction in an emerging pathogen.</title>
        <authorList>
            <person name="Chain P.S.G."/>
            <person name="Hu P."/>
            <person name="Malfatti S.A."/>
            <person name="Radnedge L."/>
            <person name="Larimer F."/>
            <person name="Vergez L.M."/>
            <person name="Worsham P."/>
            <person name="Chu M.C."/>
            <person name="Andersen G.L."/>
        </authorList>
    </citation>
    <scope>NUCLEOTIDE SEQUENCE [LARGE SCALE GENOMIC DNA]</scope>
    <source>
        <strain>Antiqua</strain>
    </source>
</reference>
<keyword id="KW-0067">ATP-binding</keyword>
<keyword id="KW-0963">Cytoplasm</keyword>
<keyword id="KW-0460">Magnesium</keyword>
<keyword id="KW-0479">Metal-binding</keyword>
<keyword id="KW-0547">Nucleotide-binding</keyword>
<keyword id="KW-0554">One-carbon metabolism</keyword>
<keyword id="KW-0630">Potassium</keyword>
<keyword id="KW-0808">Transferase</keyword>
<proteinExistence type="inferred from homology"/>
<accession>Q1CB69</accession>